<accession>Q83PP2</accession>
<accession>Q7BZ28</accession>
<evidence type="ECO:0000255" key="1">
    <source>
        <dbReference type="HAMAP-Rule" id="MF_01601"/>
    </source>
</evidence>
<protein>
    <recommendedName>
        <fullName evidence="1">ADP-L-glycero-D-manno-heptose-6-epimerase</fullName>
        <ecNumber evidence="1">5.1.3.20</ecNumber>
    </recommendedName>
    <alternativeName>
        <fullName evidence="1">ADP-L-glycero-beta-D-manno-heptose-6-epimerase</fullName>
        <shortName evidence="1">ADP-glyceromanno-heptose 6-epimerase</shortName>
        <shortName evidence="1">ADP-hep 6-epimerase</shortName>
        <shortName evidence="1">AGME</shortName>
    </alternativeName>
</protein>
<dbReference type="EC" id="5.1.3.20" evidence="1"/>
<dbReference type="EMBL" id="AE005674">
    <property type="protein sequence ID" value="AAN45106.1"/>
    <property type="molecule type" value="Genomic_DNA"/>
</dbReference>
<dbReference type="EMBL" id="AE014073">
    <property type="protein sequence ID" value="AAP19086.1"/>
    <property type="molecule type" value="Genomic_DNA"/>
</dbReference>
<dbReference type="RefSeq" id="NP_709399.1">
    <property type="nucleotide sequence ID" value="NC_004337.2"/>
</dbReference>
<dbReference type="RefSeq" id="WP_000587750.1">
    <property type="nucleotide sequence ID" value="NZ_WPGW01000242.1"/>
</dbReference>
<dbReference type="SMR" id="Q83PP2"/>
<dbReference type="STRING" id="198214.SF3659"/>
<dbReference type="PaxDb" id="198214-SF3659"/>
<dbReference type="GeneID" id="1026210"/>
<dbReference type="GeneID" id="93778334"/>
<dbReference type="KEGG" id="sfl:SF3659"/>
<dbReference type="KEGG" id="sfx:S4109"/>
<dbReference type="PATRIC" id="fig|198214.7.peg.4321"/>
<dbReference type="HOGENOM" id="CLU_007383_1_3_6"/>
<dbReference type="UniPathway" id="UPA00356">
    <property type="reaction ID" value="UER00440"/>
</dbReference>
<dbReference type="UniPathway" id="UPA00958"/>
<dbReference type="Proteomes" id="UP000001006">
    <property type="component" value="Chromosome"/>
</dbReference>
<dbReference type="Proteomes" id="UP000002673">
    <property type="component" value="Chromosome"/>
</dbReference>
<dbReference type="GO" id="GO:0008712">
    <property type="term" value="F:ADP-glyceromanno-heptose 6-epimerase activity"/>
    <property type="evidence" value="ECO:0007669"/>
    <property type="project" value="UniProtKB-UniRule"/>
</dbReference>
<dbReference type="GO" id="GO:0050661">
    <property type="term" value="F:NADP binding"/>
    <property type="evidence" value="ECO:0007669"/>
    <property type="project" value="InterPro"/>
</dbReference>
<dbReference type="GO" id="GO:0097171">
    <property type="term" value="P:ADP-L-glycero-beta-D-manno-heptose biosynthetic process"/>
    <property type="evidence" value="ECO:0007669"/>
    <property type="project" value="UniProtKB-UniPathway"/>
</dbReference>
<dbReference type="GO" id="GO:0009244">
    <property type="term" value="P:lipopolysaccharide core region biosynthetic process"/>
    <property type="evidence" value="ECO:0007669"/>
    <property type="project" value="UniProtKB-UniPathway"/>
</dbReference>
<dbReference type="CDD" id="cd05248">
    <property type="entry name" value="ADP_GME_SDR_e"/>
    <property type="match status" value="1"/>
</dbReference>
<dbReference type="Gene3D" id="3.40.50.720">
    <property type="entry name" value="NAD(P)-binding Rossmann-like Domain"/>
    <property type="match status" value="1"/>
</dbReference>
<dbReference type="Gene3D" id="3.90.25.10">
    <property type="entry name" value="UDP-galactose 4-epimerase, domain 1"/>
    <property type="match status" value="1"/>
</dbReference>
<dbReference type="HAMAP" id="MF_01601">
    <property type="entry name" value="Heptose_epimerase"/>
    <property type="match status" value="1"/>
</dbReference>
<dbReference type="InterPro" id="IPR001509">
    <property type="entry name" value="Epimerase_deHydtase"/>
</dbReference>
<dbReference type="InterPro" id="IPR011912">
    <property type="entry name" value="Heptose_epim"/>
</dbReference>
<dbReference type="InterPro" id="IPR036291">
    <property type="entry name" value="NAD(P)-bd_dom_sf"/>
</dbReference>
<dbReference type="NCBIfam" id="TIGR02197">
    <property type="entry name" value="heptose_epim"/>
    <property type="match status" value="1"/>
</dbReference>
<dbReference type="NCBIfam" id="NF008360">
    <property type="entry name" value="PRK11150.1"/>
    <property type="match status" value="1"/>
</dbReference>
<dbReference type="PANTHER" id="PTHR43103:SF3">
    <property type="entry name" value="ADP-L-GLYCERO-D-MANNO-HEPTOSE-6-EPIMERASE"/>
    <property type="match status" value="1"/>
</dbReference>
<dbReference type="PANTHER" id="PTHR43103">
    <property type="entry name" value="NUCLEOSIDE-DIPHOSPHATE-SUGAR EPIMERASE"/>
    <property type="match status" value="1"/>
</dbReference>
<dbReference type="Pfam" id="PF01370">
    <property type="entry name" value="Epimerase"/>
    <property type="match status" value="1"/>
</dbReference>
<dbReference type="SUPFAM" id="SSF51735">
    <property type="entry name" value="NAD(P)-binding Rossmann-fold domains"/>
    <property type="match status" value="1"/>
</dbReference>
<feature type="chain" id="PRO_0000205810" description="ADP-L-glycero-D-manno-heptose-6-epimerase">
    <location>
        <begin position="1"/>
        <end position="310"/>
    </location>
</feature>
<feature type="active site" description="Proton acceptor" evidence="1">
    <location>
        <position position="140"/>
    </location>
</feature>
<feature type="active site" description="Proton acceptor" evidence="1">
    <location>
        <position position="178"/>
    </location>
</feature>
<feature type="binding site" evidence="1">
    <location>
        <begin position="10"/>
        <end position="11"/>
    </location>
    <ligand>
        <name>NADP(+)</name>
        <dbReference type="ChEBI" id="CHEBI:58349"/>
    </ligand>
</feature>
<feature type="binding site" evidence="1">
    <location>
        <begin position="31"/>
        <end position="32"/>
    </location>
    <ligand>
        <name>NADP(+)</name>
        <dbReference type="ChEBI" id="CHEBI:58349"/>
    </ligand>
</feature>
<feature type="binding site" evidence="1">
    <location>
        <position position="38"/>
    </location>
    <ligand>
        <name>NADP(+)</name>
        <dbReference type="ChEBI" id="CHEBI:58349"/>
    </ligand>
</feature>
<feature type="binding site" evidence="1">
    <location>
        <position position="53"/>
    </location>
    <ligand>
        <name>NADP(+)</name>
        <dbReference type="ChEBI" id="CHEBI:58349"/>
    </ligand>
</feature>
<feature type="binding site" evidence="1">
    <location>
        <begin position="75"/>
        <end position="79"/>
    </location>
    <ligand>
        <name>NADP(+)</name>
        <dbReference type="ChEBI" id="CHEBI:58349"/>
    </ligand>
</feature>
<feature type="binding site" evidence="1">
    <location>
        <position position="92"/>
    </location>
    <ligand>
        <name>NADP(+)</name>
        <dbReference type="ChEBI" id="CHEBI:58349"/>
    </ligand>
</feature>
<feature type="binding site" evidence="1">
    <location>
        <position position="144"/>
    </location>
    <ligand>
        <name>NADP(+)</name>
        <dbReference type="ChEBI" id="CHEBI:58349"/>
    </ligand>
</feature>
<feature type="binding site" evidence="1">
    <location>
        <position position="169"/>
    </location>
    <ligand>
        <name>substrate</name>
    </ligand>
</feature>
<feature type="binding site" evidence="1">
    <location>
        <position position="170"/>
    </location>
    <ligand>
        <name>NADP(+)</name>
        <dbReference type="ChEBI" id="CHEBI:58349"/>
    </ligand>
</feature>
<feature type="binding site" evidence="1">
    <location>
        <position position="178"/>
    </location>
    <ligand>
        <name>NADP(+)</name>
        <dbReference type="ChEBI" id="CHEBI:58349"/>
    </ligand>
</feature>
<feature type="binding site" evidence="1">
    <location>
        <position position="180"/>
    </location>
    <ligand>
        <name>substrate</name>
    </ligand>
</feature>
<feature type="binding site" evidence="1">
    <location>
        <position position="187"/>
    </location>
    <ligand>
        <name>substrate</name>
    </ligand>
</feature>
<feature type="binding site" evidence="1">
    <location>
        <begin position="201"/>
        <end position="204"/>
    </location>
    <ligand>
        <name>substrate</name>
    </ligand>
</feature>
<feature type="binding site" evidence="1">
    <location>
        <position position="209"/>
    </location>
    <ligand>
        <name>substrate</name>
    </ligand>
</feature>
<feature type="binding site" evidence="1">
    <location>
        <position position="272"/>
    </location>
    <ligand>
        <name>substrate</name>
    </ligand>
</feature>
<feature type="modified residue" description="N6-acetyllysine" evidence="1">
    <location>
        <position position="267"/>
    </location>
</feature>
<comment type="function">
    <text evidence="1">Catalyzes the interconversion between ADP-D-glycero-beta-D-manno-heptose and ADP-L-glycero-beta-D-manno-heptose via an epimerization at carbon 6 of the heptose.</text>
</comment>
<comment type="catalytic activity">
    <reaction evidence="1">
        <text>ADP-D-glycero-beta-D-manno-heptose = ADP-L-glycero-beta-D-manno-heptose</text>
        <dbReference type="Rhea" id="RHEA:17577"/>
        <dbReference type="ChEBI" id="CHEBI:59967"/>
        <dbReference type="ChEBI" id="CHEBI:61506"/>
        <dbReference type="EC" id="5.1.3.20"/>
    </reaction>
</comment>
<comment type="cofactor">
    <cofactor evidence="1">
        <name>NADP(+)</name>
        <dbReference type="ChEBI" id="CHEBI:58349"/>
    </cofactor>
    <text evidence="1">Binds 1 NADP(+) per subunit.</text>
</comment>
<comment type="pathway">
    <text evidence="1">Nucleotide-sugar biosynthesis; ADP-L-glycero-beta-D-manno-heptose biosynthesis; ADP-L-glycero-beta-D-manno-heptose from D-glycero-beta-D-manno-heptose 7-phosphate: step 4/4.</text>
</comment>
<comment type="pathway">
    <text>Bacterial outer membrane biogenesis; LPS core biosynthesis.</text>
</comment>
<comment type="subunit">
    <text evidence="1">Homopentamer.</text>
</comment>
<comment type="domain">
    <text evidence="1">Contains a large N-terminal NADP-binding domain, and a smaller C-terminal substrate-binding domain.</text>
</comment>
<comment type="similarity">
    <text evidence="1">Belongs to the NAD(P)-dependent epimerase/dehydratase family. HldD subfamily.</text>
</comment>
<proteinExistence type="inferred from homology"/>
<keyword id="KW-0007">Acetylation</keyword>
<keyword id="KW-0119">Carbohydrate metabolism</keyword>
<keyword id="KW-0413">Isomerase</keyword>
<keyword id="KW-0521">NADP</keyword>
<keyword id="KW-1185">Reference proteome</keyword>
<sequence length="310" mass="34894">MIIVTGGAGFIGSNIVKALNDKGITDILVVDNLKDGTKFVNLVDLDIADYMDKEDFLIQIMAGEEFGDVEAIFHEGACSSTTEWDGKYMMDNNYQYSKELLHYCLEREIPFLYASSAATYGGRTSDFIESREYEKPLNVYGYSKFLFDEYVRQILPEANSQIVGFRYFNVYGPREGHKGSMASVAFHLNTQLNNGESPKLFEGSENFKRDFVYVGDVADVNLWFLENGVSGIFNLGTGRAESFQAVADATLAYHKKGQIEYIPFPDKLKGRYQAFTQADLTNLRAAGYDKPFKTVAEGVTEYMAWLNRDA</sequence>
<reference key="1">
    <citation type="journal article" date="2002" name="Nucleic Acids Res.">
        <title>Genome sequence of Shigella flexneri 2a: insights into pathogenicity through comparison with genomes of Escherichia coli K12 and O157.</title>
        <authorList>
            <person name="Jin Q."/>
            <person name="Yuan Z."/>
            <person name="Xu J."/>
            <person name="Wang Y."/>
            <person name="Shen Y."/>
            <person name="Lu W."/>
            <person name="Wang J."/>
            <person name="Liu H."/>
            <person name="Yang J."/>
            <person name="Yang F."/>
            <person name="Zhang X."/>
            <person name="Zhang J."/>
            <person name="Yang G."/>
            <person name="Wu H."/>
            <person name="Qu D."/>
            <person name="Dong J."/>
            <person name="Sun L."/>
            <person name="Xue Y."/>
            <person name="Zhao A."/>
            <person name="Gao Y."/>
            <person name="Zhu J."/>
            <person name="Kan B."/>
            <person name="Ding K."/>
            <person name="Chen S."/>
            <person name="Cheng H."/>
            <person name="Yao Z."/>
            <person name="He B."/>
            <person name="Chen R."/>
            <person name="Ma D."/>
            <person name="Qiang B."/>
            <person name="Wen Y."/>
            <person name="Hou Y."/>
            <person name="Yu J."/>
        </authorList>
    </citation>
    <scope>NUCLEOTIDE SEQUENCE [LARGE SCALE GENOMIC DNA]</scope>
    <source>
        <strain>301 / Serotype 2a</strain>
    </source>
</reference>
<reference key="2">
    <citation type="journal article" date="2003" name="Infect. Immun.">
        <title>Complete genome sequence and comparative genomics of Shigella flexneri serotype 2a strain 2457T.</title>
        <authorList>
            <person name="Wei J."/>
            <person name="Goldberg M.B."/>
            <person name="Burland V."/>
            <person name="Venkatesan M.M."/>
            <person name="Deng W."/>
            <person name="Fournier G."/>
            <person name="Mayhew G.F."/>
            <person name="Plunkett G. III"/>
            <person name="Rose D.J."/>
            <person name="Darling A."/>
            <person name="Mau B."/>
            <person name="Perna N.T."/>
            <person name="Payne S.M."/>
            <person name="Runyen-Janecky L.J."/>
            <person name="Zhou S."/>
            <person name="Schwartz D.C."/>
            <person name="Blattner F.R."/>
        </authorList>
    </citation>
    <scope>NUCLEOTIDE SEQUENCE [LARGE SCALE GENOMIC DNA]</scope>
    <source>
        <strain>ATCC 700930 / 2457T / Serotype 2a</strain>
    </source>
</reference>
<gene>
    <name evidence="1" type="primary">hldD</name>
    <name type="synonym">rfaD</name>
    <name type="ordered locus">SF3659</name>
    <name type="ordered locus">S4109</name>
</gene>
<organism>
    <name type="scientific">Shigella flexneri</name>
    <dbReference type="NCBI Taxonomy" id="623"/>
    <lineage>
        <taxon>Bacteria</taxon>
        <taxon>Pseudomonadati</taxon>
        <taxon>Pseudomonadota</taxon>
        <taxon>Gammaproteobacteria</taxon>
        <taxon>Enterobacterales</taxon>
        <taxon>Enterobacteriaceae</taxon>
        <taxon>Shigella</taxon>
    </lineage>
</organism>
<name>HLDD_SHIFL</name>